<sequence length="148" mass="15983">MNIELKLLNKEIIKEVPEYGTEGSAAVDLRACLSEAEFLSPGECKLIGTGIAINIANPNYAAMILPRSGLGHKKGLVLGNGTGLIDSDYQGELMVSCFNRSQEVIEIEPMMRFAQLVVVPVVQAKFDIVEEFSQRTIRSAGGFGHTGV</sequence>
<evidence type="ECO:0000255" key="1">
    <source>
        <dbReference type="HAMAP-Rule" id="MF_00116"/>
    </source>
</evidence>
<comment type="function">
    <text evidence="1">This enzyme is involved in nucleotide metabolism: it produces dUMP, the immediate precursor of thymidine nucleotides and it decreases the intracellular concentration of dUTP so that uracil cannot be incorporated into DNA.</text>
</comment>
<comment type="catalytic activity">
    <reaction evidence="1">
        <text>dUTP + H2O = dUMP + diphosphate + H(+)</text>
        <dbReference type="Rhea" id="RHEA:10248"/>
        <dbReference type="ChEBI" id="CHEBI:15377"/>
        <dbReference type="ChEBI" id="CHEBI:15378"/>
        <dbReference type="ChEBI" id="CHEBI:33019"/>
        <dbReference type="ChEBI" id="CHEBI:61555"/>
        <dbReference type="ChEBI" id="CHEBI:246422"/>
        <dbReference type="EC" id="3.6.1.23"/>
    </reaction>
</comment>
<comment type="cofactor">
    <cofactor evidence="1">
        <name>Mg(2+)</name>
        <dbReference type="ChEBI" id="CHEBI:18420"/>
    </cofactor>
</comment>
<comment type="pathway">
    <text evidence="1">Pyrimidine metabolism; dUMP biosynthesis; dUMP from dCTP (dUTP route): step 2/2.</text>
</comment>
<comment type="similarity">
    <text evidence="1">Belongs to the dUTPase family.</text>
</comment>
<dbReference type="EC" id="3.6.1.23" evidence="1"/>
<dbReference type="EMBL" id="CP000937">
    <property type="protein sequence ID" value="ABZ86811.1"/>
    <property type="molecule type" value="Genomic_DNA"/>
</dbReference>
<dbReference type="SMR" id="B0U0Z5"/>
<dbReference type="KEGG" id="fph:Fphi_0592"/>
<dbReference type="eggNOG" id="COG0756">
    <property type="taxonomic scope" value="Bacteria"/>
</dbReference>
<dbReference type="HOGENOM" id="CLU_068508_1_1_6"/>
<dbReference type="UniPathway" id="UPA00610">
    <property type="reaction ID" value="UER00666"/>
</dbReference>
<dbReference type="GO" id="GO:0004170">
    <property type="term" value="F:dUTP diphosphatase activity"/>
    <property type="evidence" value="ECO:0007669"/>
    <property type="project" value="UniProtKB-UniRule"/>
</dbReference>
<dbReference type="GO" id="GO:0000287">
    <property type="term" value="F:magnesium ion binding"/>
    <property type="evidence" value="ECO:0007669"/>
    <property type="project" value="UniProtKB-UniRule"/>
</dbReference>
<dbReference type="GO" id="GO:0006226">
    <property type="term" value="P:dUMP biosynthetic process"/>
    <property type="evidence" value="ECO:0007669"/>
    <property type="project" value="UniProtKB-UniRule"/>
</dbReference>
<dbReference type="GO" id="GO:0046081">
    <property type="term" value="P:dUTP catabolic process"/>
    <property type="evidence" value="ECO:0007669"/>
    <property type="project" value="InterPro"/>
</dbReference>
<dbReference type="CDD" id="cd07557">
    <property type="entry name" value="trimeric_dUTPase"/>
    <property type="match status" value="1"/>
</dbReference>
<dbReference type="FunFam" id="2.70.40.10:FF:000002">
    <property type="entry name" value="dUTP diphosphatase"/>
    <property type="match status" value="1"/>
</dbReference>
<dbReference type="Gene3D" id="2.70.40.10">
    <property type="match status" value="1"/>
</dbReference>
<dbReference type="HAMAP" id="MF_00116">
    <property type="entry name" value="dUTPase_bact"/>
    <property type="match status" value="1"/>
</dbReference>
<dbReference type="InterPro" id="IPR008181">
    <property type="entry name" value="dUTPase"/>
</dbReference>
<dbReference type="InterPro" id="IPR029054">
    <property type="entry name" value="dUTPase-like"/>
</dbReference>
<dbReference type="InterPro" id="IPR036157">
    <property type="entry name" value="dUTPase-like_sf"/>
</dbReference>
<dbReference type="InterPro" id="IPR033704">
    <property type="entry name" value="dUTPase_trimeric"/>
</dbReference>
<dbReference type="NCBIfam" id="TIGR00576">
    <property type="entry name" value="dut"/>
    <property type="match status" value="1"/>
</dbReference>
<dbReference type="NCBIfam" id="NF001862">
    <property type="entry name" value="PRK00601.1"/>
    <property type="match status" value="1"/>
</dbReference>
<dbReference type="PANTHER" id="PTHR11241">
    <property type="entry name" value="DEOXYURIDINE 5'-TRIPHOSPHATE NUCLEOTIDOHYDROLASE"/>
    <property type="match status" value="1"/>
</dbReference>
<dbReference type="PANTHER" id="PTHR11241:SF0">
    <property type="entry name" value="DEOXYURIDINE 5'-TRIPHOSPHATE NUCLEOTIDOHYDROLASE"/>
    <property type="match status" value="1"/>
</dbReference>
<dbReference type="Pfam" id="PF00692">
    <property type="entry name" value="dUTPase"/>
    <property type="match status" value="1"/>
</dbReference>
<dbReference type="SUPFAM" id="SSF51283">
    <property type="entry name" value="dUTPase-like"/>
    <property type="match status" value="1"/>
</dbReference>
<name>DUT_FRAP2</name>
<accession>B0U0Z5</accession>
<protein>
    <recommendedName>
        <fullName evidence="1">Deoxyuridine 5'-triphosphate nucleotidohydrolase</fullName>
        <shortName evidence="1">dUTPase</shortName>
        <ecNumber evidence="1">3.6.1.23</ecNumber>
    </recommendedName>
    <alternativeName>
        <fullName evidence="1">dUTP pyrophosphatase</fullName>
    </alternativeName>
</protein>
<proteinExistence type="inferred from homology"/>
<reference key="1">
    <citation type="submission" date="2007-12" db="EMBL/GenBank/DDBJ databases">
        <title>Complete sequence of chromosome of Francisella philomiragia subsp. philomiragia ATCC 25017.</title>
        <authorList>
            <consortium name="US DOE Joint Genome Institute"/>
            <person name="Copeland A."/>
            <person name="Lucas S."/>
            <person name="Lapidus A."/>
            <person name="Barry K."/>
            <person name="Detter J.C."/>
            <person name="Glavina del Rio T."/>
            <person name="Hammon N."/>
            <person name="Israni S."/>
            <person name="Dalin E."/>
            <person name="Tice H."/>
            <person name="Pitluck S."/>
            <person name="Chain P."/>
            <person name="Malfatti S."/>
            <person name="Shin M."/>
            <person name="Vergez L."/>
            <person name="Schmutz J."/>
            <person name="Larimer F."/>
            <person name="Land M."/>
            <person name="Hauser L."/>
            <person name="Richardson P."/>
        </authorList>
    </citation>
    <scope>NUCLEOTIDE SEQUENCE [LARGE SCALE GENOMIC DNA]</scope>
    <source>
        <strain>ATCC 25017 / CCUG 19701 / FSC 153 / O#319-036</strain>
    </source>
</reference>
<gene>
    <name evidence="1" type="primary">dut</name>
    <name type="ordered locus">Fphi_0592</name>
</gene>
<keyword id="KW-0378">Hydrolase</keyword>
<keyword id="KW-0460">Magnesium</keyword>
<keyword id="KW-0479">Metal-binding</keyword>
<keyword id="KW-0546">Nucleotide metabolism</keyword>
<feature type="chain" id="PRO_1000076059" description="Deoxyuridine 5'-triphosphate nucleotidohydrolase">
    <location>
        <begin position="1"/>
        <end position="148"/>
    </location>
</feature>
<feature type="binding site" evidence="1">
    <location>
        <begin position="67"/>
        <end position="69"/>
    </location>
    <ligand>
        <name>substrate</name>
    </ligand>
</feature>
<feature type="binding site" evidence="1">
    <location>
        <position position="80"/>
    </location>
    <ligand>
        <name>substrate</name>
    </ligand>
</feature>
<feature type="binding site" evidence="1">
    <location>
        <begin position="84"/>
        <end position="86"/>
    </location>
    <ligand>
        <name>substrate</name>
    </ligand>
</feature>
<feature type="binding site" evidence="1">
    <location>
        <position position="94"/>
    </location>
    <ligand>
        <name>substrate</name>
    </ligand>
</feature>
<organism>
    <name type="scientific">Francisella philomiragia subsp. philomiragia (strain ATCC 25017 / CCUG 19701 / FSC 153 / O#319-036)</name>
    <dbReference type="NCBI Taxonomy" id="484022"/>
    <lineage>
        <taxon>Bacteria</taxon>
        <taxon>Pseudomonadati</taxon>
        <taxon>Pseudomonadota</taxon>
        <taxon>Gammaproteobacteria</taxon>
        <taxon>Thiotrichales</taxon>
        <taxon>Francisellaceae</taxon>
        <taxon>Francisella</taxon>
    </lineage>
</organism>